<organism>
    <name type="scientific">Tolumonas auensis (strain DSM 9187 / NBRC 110442 / TA 4)</name>
    <dbReference type="NCBI Taxonomy" id="595494"/>
    <lineage>
        <taxon>Bacteria</taxon>
        <taxon>Pseudomonadati</taxon>
        <taxon>Pseudomonadota</taxon>
        <taxon>Gammaproteobacteria</taxon>
        <taxon>Aeromonadales</taxon>
        <taxon>Aeromonadaceae</taxon>
        <taxon>Tolumonas</taxon>
    </lineage>
</organism>
<sequence length="355" mass="38131">MSRTMVIMAGGTGGHVFPGLAVAHRLQADGWNIHWLGTPDRMEADLVPAHGFPIEFINIRGLRNHGLVRKLLAPFQICKAVLQAFMILRRIRPDVVLGMGGYAAGPGGVAAKLLGIPVVLHEQNAAAGLTNRLLAKIATRILMGFEGAFPLTERSRVVGNPVRDEFLQLAQKPLKKYHTGNPLKILIVGGSLGARPLNQIVPHALAKLNNIDVRHQSGKGNASAVSDLYQSLGVTTVTVTEFITDMAAAYEWADLLICRAGALTVAEVAAAGIPAVFVPLPHAVDDHQTRNAESLTRRGAAVLMPQKEMTADKLAELIAQWQVDPRQLQKIAQLSRAAAILDATDRVVSECKALI</sequence>
<proteinExistence type="inferred from homology"/>
<reference key="1">
    <citation type="submission" date="2009-05" db="EMBL/GenBank/DDBJ databases">
        <title>Complete sequence of Tolumonas auensis DSM 9187.</title>
        <authorList>
            <consortium name="US DOE Joint Genome Institute"/>
            <person name="Lucas S."/>
            <person name="Copeland A."/>
            <person name="Lapidus A."/>
            <person name="Glavina del Rio T."/>
            <person name="Tice H."/>
            <person name="Bruce D."/>
            <person name="Goodwin L."/>
            <person name="Pitluck S."/>
            <person name="Chertkov O."/>
            <person name="Brettin T."/>
            <person name="Detter J.C."/>
            <person name="Han C."/>
            <person name="Larimer F."/>
            <person name="Land M."/>
            <person name="Hauser L."/>
            <person name="Kyrpides N."/>
            <person name="Mikhailova N."/>
            <person name="Spring S."/>
            <person name="Beller H."/>
        </authorList>
    </citation>
    <scope>NUCLEOTIDE SEQUENCE [LARGE SCALE GENOMIC DNA]</scope>
    <source>
        <strain>DSM 9187 / NBRC 110442 / TA 4</strain>
    </source>
</reference>
<dbReference type="EC" id="2.4.1.227" evidence="1"/>
<dbReference type="EMBL" id="CP001616">
    <property type="protein sequence ID" value="ACQ92154.1"/>
    <property type="molecule type" value="Genomic_DNA"/>
</dbReference>
<dbReference type="RefSeq" id="WP_012728753.1">
    <property type="nucleotide sequence ID" value="NC_012691.1"/>
</dbReference>
<dbReference type="SMR" id="C4LA25"/>
<dbReference type="STRING" id="595494.Tola_0525"/>
<dbReference type="CAZy" id="GT28">
    <property type="family name" value="Glycosyltransferase Family 28"/>
</dbReference>
<dbReference type="KEGG" id="tau:Tola_0525"/>
<dbReference type="eggNOG" id="COG0707">
    <property type="taxonomic scope" value="Bacteria"/>
</dbReference>
<dbReference type="HOGENOM" id="CLU_037404_2_0_6"/>
<dbReference type="OrthoDB" id="9808936at2"/>
<dbReference type="UniPathway" id="UPA00219"/>
<dbReference type="Proteomes" id="UP000009073">
    <property type="component" value="Chromosome"/>
</dbReference>
<dbReference type="GO" id="GO:0005886">
    <property type="term" value="C:plasma membrane"/>
    <property type="evidence" value="ECO:0007669"/>
    <property type="project" value="UniProtKB-SubCell"/>
</dbReference>
<dbReference type="GO" id="GO:0051991">
    <property type="term" value="F:UDP-N-acetyl-D-glucosamine:N-acetylmuramoyl-L-alanyl-D-glutamyl-meso-2,6-diaminopimelyl-D-alanyl-D-alanine-diphosphoundecaprenol 4-beta-N-acetylglucosaminlytransferase activity"/>
    <property type="evidence" value="ECO:0007669"/>
    <property type="project" value="RHEA"/>
</dbReference>
<dbReference type="GO" id="GO:0050511">
    <property type="term" value="F:undecaprenyldiphospho-muramoylpentapeptide beta-N-acetylglucosaminyltransferase activity"/>
    <property type="evidence" value="ECO:0007669"/>
    <property type="project" value="UniProtKB-UniRule"/>
</dbReference>
<dbReference type="GO" id="GO:0005975">
    <property type="term" value="P:carbohydrate metabolic process"/>
    <property type="evidence" value="ECO:0007669"/>
    <property type="project" value="InterPro"/>
</dbReference>
<dbReference type="GO" id="GO:0051301">
    <property type="term" value="P:cell division"/>
    <property type="evidence" value="ECO:0007669"/>
    <property type="project" value="UniProtKB-KW"/>
</dbReference>
<dbReference type="GO" id="GO:0071555">
    <property type="term" value="P:cell wall organization"/>
    <property type="evidence" value="ECO:0007669"/>
    <property type="project" value="UniProtKB-KW"/>
</dbReference>
<dbReference type="GO" id="GO:0030259">
    <property type="term" value="P:lipid glycosylation"/>
    <property type="evidence" value="ECO:0007669"/>
    <property type="project" value="UniProtKB-UniRule"/>
</dbReference>
<dbReference type="GO" id="GO:0009252">
    <property type="term" value="P:peptidoglycan biosynthetic process"/>
    <property type="evidence" value="ECO:0007669"/>
    <property type="project" value="UniProtKB-UniRule"/>
</dbReference>
<dbReference type="GO" id="GO:0008360">
    <property type="term" value="P:regulation of cell shape"/>
    <property type="evidence" value="ECO:0007669"/>
    <property type="project" value="UniProtKB-KW"/>
</dbReference>
<dbReference type="CDD" id="cd03785">
    <property type="entry name" value="GT28_MurG"/>
    <property type="match status" value="1"/>
</dbReference>
<dbReference type="Gene3D" id="3.40.50.2000">
    <property type="entry name" value="Glycogen Phosphorylase B"/>
    <property type="match status" value="2"/>
</dbReference>
<dbReference type="HAMAP" id="MF_00033">
    <property type="entry name" value="MurG"/>
    <property type="match status" value="1"/>
</dbReference>
<dbReference type="InterPro" id="IPR006009">
    <property type="entry name" value="GlcNAc_MurG"/>
</dbReference>
<dbReference type="InterPro" id="IPR007235">
    <property type="entry name" value="Glyco_trans_28_C"/>
</dbReference>
<dbReference type="InterPro" id="IPR004276">
    <property type="entry name" value="GlycoTrans_28_N"/>
</dbReference>
<dbReference type="NCBIfam" id="TIGR01133">
    <property type="entry name" value="murG"/>
    <property type="match status" value="1"/>
</dbReference>
<dbReference type="PANTHER" id="PTHR21015:SF22">
    <property type="entry name" value="GLYCOSYLTRANSFERASE"/>
    <property type="match status" value="1"/>
</dbReference>
<dbReference type="PANTHER" id="PTHR21015">
    <property type="entry name" value="UDP-N-ACETYLGLUCOSAMINE--N-ACETYLMURAMYL-(PENTAPEPTIDE) PYROPHOSPHORYL-UNDECAPRENOL N-ACETYLGLUCOSAMINE TRANSFERASE 1"/>
    <property type="match status" value="1"/>
</dbReference>
<dbReference type="Pfam" id="PF04101">
    <property type="entry name" value="Glyco_tran_28_C"/>
    <property type="match status" value="1"/>
</dbReference>
<dbReference type="Pfam" id="PF03033">
    <property type="entry name" value="Glyco_transf_28"/>
    <property type="match status" value="1"/>
</dbReference>
<dbReference type="SUPFAM" id="SSF53756">
    <property type="entry name" value="UDP-Glycosyltransferase/glycogen phosphorylase"/>
    <property type="match status" value="1"/>
</dbReference>
<accession>C4LA25</accession>
<comment type="function">
    <text evidence="1">Cell wall formation. Catalyzes the transfer of a GlcNAc subunit on undecaprenyl-pyrophosphoryl-MurNAc-pentapeptide (lipid intermediate I) to form undecaprenyl-pyrophosphoryl-MurNAc-(pentapeptide)GlcNAc (lipid intermediate II).</text>
</comment>
<comment type="catalytic activity">
    <reaction evidence="1">
        <text>di-trans,octa-cis-undecaprenyl diphospho-N-acetyl-alpha-D-muramoyl-L-alanyl-D-glutamyl-meso-2,6-diaminopimeloyl-D-alanyl-D-alanine + UDP-N-acetyl-alpha-D-glucosamine = di-trans,octa-cis-undecaprenyl diphospho-[N-acetyl-alpha-D-glucosaminyl-(1-&gt;4)]-N-acetyl-alpha-D-muramoyl-L-alanyl-D-glutamyl-meso-2,6-diaminopimeloyl-D-alanyl-D-alanine + UDP + H(+)</text>
        <dbReference type="Rhea" id="RHEA:31227"/>
        <dbReference type="ChEBI" id="CHEBI:15378"/>
        <dbReference type="ChEBI" id="CHEBI:57705"/>
        <dbReference type="ChEBI" id="CHEBI:58223"/>
        <dbReference type="ChEBI" id="CHEBI:61387"/>
        <dbReference type="ChEBI" id="CHEBI:61388"/>
        <dbReference type="EC" id="2.4.1.227"/>
    </reaction>
</comment>
<comment type="pathway">
    <text evidence="1">Cell wall biogenesis; peptidoglycan biosynthesis.</text>
</comment>
<comment type="subcellular location">
    <subcellularLocation>
        <location evidence="1">Cell inner membrane</location>
        <topology evidence="1">Peripheral membrane protein</topology>
        <orientation evidence="1">Cytoplasmic side</orientation>
    </subcellularLocation>
</comment>
<comment type="similarity">
    <text evidence="1">Belongs to the glycosyltransferase 28 family. MurG subfamily.</text>
</comment>
<feature type="chain" id="PRO_1000202031" description="UDP-N-acetylglucosamine--N-acetylmuramyl-(pentapeptide) pyrophosphoryl-undecaprenol N-acetylglucosamine transferase">
    <location>
        <begin position="1"/>
        <end position="355"/>
    </location>
</feature>
<feature type="binding site" evidence="1">
    <location>
        <begin position="12"/>
        <end position="14"/>
    </location>
    <ligand>
        <name>UDP-N-acetyl-alpha-D-glucosamine</name>
        <dbReference type="ChEBI" id="CHEBI:57705"/>
    </ligand>
</feature>
<feature type="binding site" evidence="1">
    <location>
        <position position="124"/>
    </location>
    <ligand>
        <name>UDP-N-acetyl-alpha-D-glucosamine</name>
        <dbReference type="ChEBI" id="CHEBI:57705"/>
    </ligand>
</feature>
<feature type="binding site" evidence="1">
    <location>
        <position position="163"/>
    </location>
    <ligand>
        <name>UDP-N-acetyl-alpha-D-glucosamine</name>
        <dbReference type="ChEBI" id="CHEBI:57705"/>
    </ligand>
</feature>
<feature type="binding site" evidence="1">
    <location>
        <position position="191"/>
    </location>
    <ligand>
        <name>UDP-N-acetyl-alpha-D-glucosamine</name>
        <dbReference type="ChEBI" id="CHEBI:57705"/>
    </ligand>
</feature>
<feature type="binding site" evidence="1">
    <location>
        <position position="243"/>
    </location>
    <ligand>
        <name>UDP-N-acetyl-alpha-D-glucosamine</name>
        <dbReference type="ChEBI" id="CHEBI:57705"/>
    </ligand>
</feature>
<feature type="binding site" evidence="1">
    <location>
        <begin position="262"/>
        <end position="267"/>
    </location>
    <ligand>
        <name>UDP-N-acetyl-alpha-D-glucosamine</name>
        <dbReference type="ChEBI" id="CHEBI:57705"/>
    </ligand>
</feature>
<feature type="binding site" evidence="1">
    <location>
        <position position="288"/>
    </location>
    <ligand>
        <name>UDP-N-acetyl-alpha-D-glucosamine</name>
        <dbReference type="ChEBI" id="CHEBI:57705"/>
    </ligand>
</feature>
<name>MURG_TOLAT</name>
<protein>
    <recommendedName>
        <fullName evidence="1">UDP-N-acetylglucosamine--N-acetylmuramyl-(pentapeptide) pyrophosphoryl-undecaprenol N-acetylglucosamine transferase</fullName>
        <ecNumber evidence="1">2.4.1.227</ecNumber>
    </recommendedName>
    <alternativeName>
        <fullName evidence="1">Undecaprenyl-PP-MurNAc-pentapeptide-UDPGlcNAc GlcNAc transferase</fullName>
    </alternativeName>
</protein>
<keyword id="KW-0131">Cell cycle</keyword>
<keyword id="KW-0132">Cell division</keyword>
<keyword id="KW-0997">Cell inner membrane</keyword>
<keyword id="KW-1003">Cell membrane</keyword>
<keyword id="KW-0133">Cell shape</keyword>
<keyword id="KW-0961">Cell wall biogenesis/degradation</keyword>
<keyword id="KW-0328">Glycosyltransferase</keyword>
<keyword id="KW-0472">Membrane</keyword>
<keyword id="KW-0573">Peptidoglycan synthesis</keyword>
<keyword id="KW-1185">Reference proteome</keyword>
<keyword id="KW-0808">Transferase</keyword>
<gene>
    <name evidence="1" type="primary">murG</name>
    <name type="ordered locus">Tola_0525</name>
</gene>
<evidence type="ECO:0000255" key="1">
    <source>
        <dbReference type="HAMAP-Rule" id="MF_00033"/>
    </source>
</evidence>